<organism>
    <name type="scientific">Burkholderia vietnamiensis (strain G4 / LMG 22486)</name>
    <name type="common">Burkholderia cepacia (strain R1808)</name>
    <dbReference type="NCBI Taxonomy" id="269482"/>
    <lineage>
        <taxon>Bacteria</taxon>
        <taxon>Pseudomonadati</taxon>
        <taxon>Pseudomonadota</taxon>
        <taxon>Betaproteobacteria</taxon>
        <taxon>Burkholderiales</taxon>
        <taxon>Burkholderiaceae</taxon>
        <taxon>Burkholderia</taxon>
        <taxon>Burkholderia cepacia complex</taxon>
    </lineage>
</organism>
<accession>A4JB94</accession>
<gene>
    <name evidence="1" type="primary">murG</name>
    <name type="ordered locus">Bcep1808_0535</name>
</gene>
<protein>
    <recommendedName>
        <fullName evidence="1">UDP-N-acetylglucosamine--N-acetylmuramyl-(pentapeptide) pyrophosphoryl-undecaprenol N-acetylglucosamine transferase</fullName>
        <ecNumber evidence="1">2.4.1.227</ecNumber>
    </recommendedName>
    <alternativeName>
        <fullName evidence="1">Undecaprenyl-PP-MurNAc-pentapeptide-UDPGlcNAc GlcNAc transferase</fullName>
    </alternativeName>
</protein>
<feature type="chain" id="PRO_1000002629" description="UDP-N-acetylglucosamine--N-acetylmuramyl-(pentapeptide) pyrophosphoryl-undecaprenol N-acetylglucosamine transferase">
    <location>
        <begin position="1"/>
        <end position="367"/>
    </location>
</feature>
<feature type="binding site" evidence="1">
    <location>
        <begin position="15"/>
        <end position="17"/>
    </location>
    <ligand>
        <name>UDP-N-acetyl-alpha-D-glucosamine</name>
        <dbReference type="ChEBI" id="CHEBI:57705"/>
    </ligand>
</feature>
<feature type="binding site" evidence="1">
    <location>
        <position position="127"/>
    </location>
    <ligand>
        <name>UDP-N-acetyl-alpha-D-glucosamine</name>
        <dbReference type="ChEBI" id="CHEBI:57705"/>
    </ligand>
</feature>
<feature type="binding site" evidence="1">
    <location>
        <position position="163"/>
    </location>
    <ligand>
        <name>UDP-N-acetyl-alpha-D-glucosamine</name>
        <dbReference type="ChEBI" id="CHEBI:57705"/>
    </ligand>
</feature>
<feature type="binding site" evidence="1">
    <location>
        <position position="191"/>
    </location>
    <ligand>
        <name>UDP-N-acetyl-alpha-D-glucosamine</name>
        <dbReference type="ChEBI" id="CHEBI:57705"/>
    </ligand>
</feature>
<feature type="binding site" evidence="1">
    <location>
        <position position="249"/>
    </location>
    <ligand>
        <name>UDP-N-acetyl-alpha-D-glucosamine</name>
        <dbReference type="ChEBI" id="CHEBI:57705"/>
    </ligand>
</feature>
<feature type="binding site" evidence="1">
    <location>
        <position position="294"/>
    </location>
    <ligand>
        <name>UDP-N-acetyl-alpha-D-glucosamine</name>
        <dbReference type="ChEBI" id="CHEBI:57705"/>
    </ligand>
</feature>
<name>MURG_BURVG</name>
<keyword id="KW-0131">Cell cycle</keyword>
<keyword id="KW-0132">Cell division</keyword>
<keyword id="KW-0997">Cell inner membrane</keyword>
<keyword id="KW-1003">Cell membrane</keyword>
<keyword id="KW-0133">Cell shape</keyword>
<keyword id="KW-0961">Cell wall biogenesis/degradation</keyword>
<keyword id="KW-0328">Glycosyltransferase</keyword>
<keyword id="KW-0472">Membrane</keyword>
<keyword id="KW-0573">Peptidoglycan synthesis</keyword>
<keyword id="KW-0808">Transferase</keyword>
<reference key="1">
    <citation type="submission" date="2007-03" db="EMBL/GenBank/DDBJ databases">
        <title>Complete sequence of chromosome 1 of Burkholderia vietnamiensis G4.</title>
        <authorList>
            <consortium name="US DOE Joint Genome Institute"/>
            <person name="Copeland A."/>
            <person name="Lucas S."/>
            <person name="Lapidus A."/>
            <person name="Barry K."/>
            <person name="Detter J.C."/>
            <person name="Glavina del Rio T."/>
            <person name="Hammon N."/>
            <person name="Israni S."/>
            <person name="Dalin E."/>
            <person name="Tice H."/>
            <person name="Pitluck S."/>
            <person name="Chain P."/>
            <person name="Malfatti S."/>
            <person name="Shin M."/>
            <person name="Vergez L."/>
            <person name="Schmutz J."/>
            <person name="Larimer F."/>
            <person name="Land M."/>
            <person name="Hauser L."/>
            <person name="Kyrpides N."/>
            <person name="Tiedje J."/>
            <person name="Richardson P."/>
        </authorList>
    </citation>
    <scope>NUCLEOTIDE SEQUENCE [LARGE SCALE GENOMIC DNA]</scope>
    <source>
        <strain>G4 / LMG 22486</strain>
    </source>
</reference>
<sequence length="367" mass="38639">MTASRRTLMVMAGGTGGHVFPGLAVAHRMEAAGWRVVWLGNPAGMEATLVPKHGIPMEYVRFGGLRGKGLKTKLTLPFNLLRACWQSLGALRRVRPDVVLGMGGYITFPAGVMTALSGRPLVLHEQNSIAGLANKVLAKFAKRVLVAFPDALPHAEWTGNPIRAELARTEAPKARYASRSGPLHVLVVGGSLGAAALNEVVPRALALLAPGERPRIVHQAGAKHIDALKANYEAAGFAGGDDVRLVPFIDDMASAYAAADLVICRSGAMTVSEIAAVGVAALFVPFPYAVDDHQTTNAAFLADAGAAVLVQQRDLSAQLLADWLRGQSRASLAAMAERSRSLAKPEATDEVARVCAKVAGANLEQLQ</sequence>
<comment type="function">
    <text evidence="1">Cell wall formation. Catalyzes the transfer of a GlcNAc subunit on undecaprenyl-pyrophosphoryl-MurNAc-pentapeptide (lipid intermediate I) to form undecaprenyl-pyrophosphoryl-MurNAc-(pentapeptide)GlcNAc (lipid intermediate II).</text>
</comment>
<comment type="catalytic activity">
    <reaction evidence="1">
        <text>di-trans,octa-cis-undecaprenyl diphospho-N-acetyl-alpha-D-muramoyl-L-alanyl-D-glutamyl-meso-2,6-diaminopimeloyl-D-alanyl-D-alanine + UDP-N-acetyl-alpha-D-glucosamine = di-trans,octa-cis-undecaprenyl diphospho-[N-acetyl-alpha-D-glucosaminyl-(1-&gt;4)]-N-acetyl-alpha-D-muramoyl-L-alanyl-D-glutamyl-meso-2,6-diaminopimeloyl-D-alanyl-D-alanine + UDP + H(+)</text>
        <dbReference type="Rhea" id="RHEA:31227"/>
        <dbReference type="ChEBI" id="CHEBI:15378"/>
        <dbReference type="ChEBI" id="CHEBI:57705"/>
        <dbReference type="ChEBI" id="CHEBI:58223"/>
        <dbReference type="ChEBI" id="CHEBI:61387"/>
        <dbReference type="ChEBI" id="CHEBI:61388"/>
        <dbReference type="EC" id="2.4.1.227"/>
    </reaction>
</comment>
<comment type="pathway">
    <text evidence="1">Cell wall biogenesis; peptidoglycan biosynthesis.</text>
</comment>
<comment type="subcellular location">
    <subcellularLocation>
        <location evidence="1">Cell inner membrane</location>
        <topology evidence="1">Peripheral membrane protein</topology>
        <orientation evidence="1">Cytoplasmic side</orientation>
    </subcellularLocation>
</comment>
<comment type="similarity">
    <text evidence="1">Belongs to the glycosyltransferase 28 family. MurG subfamily.</text>
</comment>
<dbReference type="EC" id="2.4.1.227" evidence="1"/>
<dbReference type="EMBL" id="CP000614">
    <property type="protein sequence ID" value="ABO53547.1"/>
    <property type="molecule type" value="Genomic_DNA"/>
</dbReference>
<dbReference type="SMR" id="A4JB94"/>
<dbReference type="CAZy" id="GT28">
    <property type="family name" value="Glycosyltransferase Family 28"/>
</dbReference>
<dbReference type="KEGG" id="bvi:Bcep1808_0535"/>
<dbReference type="eggNOG" id="COG0707">
    <property type="taxonomic scope" value="Bacteria"/>
</dbReference>
<dbReference type="HOGENOM" id="CLU_037404_2_0_4"/>
<dbReference type="UniPathway" id="UPA00219"/>
<dbReference type="Proteomes" id="UP000002287">
    <property type="component" value="Chromosome 1"/>
</dbReference>
<dbReference type="GO" id="GO:0005886">
    <property type="term" value="C:plasma membrane"/>
    <property type="evidence" value="ECO:0007669"/>
    <property type="project" value="UniProtKB-SubCell"/>
</dbReference>
<dbReference type="GO" id="GO:0051991">
    <property type="term" value="F:UDP-N-acetyl-D-glucosamine:N-acetylmuramoyl-L-alanyl-D-glutamyl-meso-2,6-diaminopimelyl-D-alanyl-D-alanine-diphosphoundecaprenol 4-beta-N-acetylglucosaminlytransferase activity"/>
    <property type="evidence" value="ECO:0007669"/>
    <property type="project" value="RHEA"/>
</dbReference>
<dbReference type="GO" id="GO:0050511">
    <property type="term" value="F:undecaprenyldiphospho-muramoylpentapeptide beta-N-acetylglucosaminyltransferase activity"/>
    <property type="evidence" value="ECO:0007669"/>
    <property type="project" value="UniProtKB-UniRule"/>
</dbReference>
<dbReference type="GO" id="GO:0005975">
    <property type="term" value="P:carbohydrate metabolic process"/>
    <property type="evidence" value="ECO:0007669"/>
    <property type="project" value="InterPro"/>
</dbReference>
<dbReference type="GO" id="GO:0051301">
    <property type="term" value="P:cell division"/>
    <property type="evidence" value="ECO:0007669"/>
    <property type="project" value="UniProtKB-KW"/>
</dbReference>
<dbReference type="GO" id="GO:0071555">
    <property type="term" value="P:cell wall organization"/>
    <property type="evidence" value="ECO:0007669"/>
    <property type="project" value="UniProtKB-KW"/>
</dbReference>
<dbReference type="GO" id="GO:0030259">
    <property type="term" value="P:lipid glycosylation"/>
    <property type="evidence" value="ECO:0007669"/>
    <property type="project" value="UniProtKB-UniRule"/>
</dbReference>
<dbReference type="GO" id="GO:0009252">
    <property type="term" value="P:peptidoglycan biosynthetic process"/>
    <property type="evidence" value="ECO:0007669"/>
    <property type="project" value="UniProtKB-UniRule"/>
</dbReference>
<dbReference type="GO" id="GO:0008360">
    <property type="term" value="P:regulation of cell shape"/>
    <property type="evidence" value="ECO:0007669"/>
    <property type="project" value="UniProtKB-KW"/>
</dbReference>
<dbReference type="CDD" id="cd03785">
    <property type="entry name" value="GT28_MurG"/>
    <property type="match status" value="1"/>
</dbReference>
<dbReference type="Gene3D" id="3.40.50.2000">
    <property type="entry name" value="Glycogen Phosphorylase B"/>
    <property type="match status" value="2"/>
</dbReference>
<dbReference type="HAMAP" id="MF_00033">
    <property type="entry name" value="MurG"/>
    <property type="match status" value="1"/>
</dbReference>
<dbReference type="InterPro" id="IPR006009">
    <property type="entry name" value="GlcNAc_MurG"/>
</dbReference>
<dbReference type="InterPro" id="IPR007235">
    <property type="entry name" value="Glyco_trans_28_C"/>
</dbReference>
<dbReference type="InterPro" id="IPR004276">
    <property type="entry name" value="GlycoTrans_28_N"/>
</dbReference>
<dbReference type="NCBIfam" id="TIGR01133">
    <property type="entry name" value="murG"/>
    <property type="match status" value="1"/>
</dbReference>
<dbReference type="PANTHER" id="PTHR21015:SF22">
    <property type="entry name" value="GLYCOSYLTRANSFERASE"/>
    <property type="match status" value="1"/>
</dbReference>
<dbReference type="PANTHER" id="PTHR21015">
    <property type="entry name" value="UDP-N-ACETYLGLUCOSAMINE--N-ACETYLMURAMYL-(PENTAPEPTIDE) PYROPHOSPHORYL-UNDECAPRENOL N-ACETYLGLUCOSAMINE TRANSFERASE 1"/>
    <property type="match status" value="1"/>
</dbReference>
<dbReference type="Pfam" id="PF04101">
    <property type="entry name" value="Glyco_tran_28_C"/>
    <property type="match status" value="1"/>
</dbReference>
<dbReference type="Pfam" id="PF03033">
    <property type="entry name" value="Glyco_transf_28"/>
    <property type="match status" value="1"/>
</dbReference>
<dbReference type="SUPFAM" id="SSF53756">
    <property type="entry name" value="UDP-Glycosyltransferase/glycogen phosphorylase"/>
    <property type="match status" value="1"/>
</dbReference>
<evidence type="ECO:0000255" key="1">
    <source>
        <dbReference type="HAMAP-Rule" id="MF_00033"/>
    </source>
</evidence>
<proteinExistence type="inferred from homology"/>